<reference key="1">
    <citation type="journal article" date="2001" name="Vet. Immunol. Immunopathol.">
        <title>Cloning and sequencing of a cDNA encoding the bovine FcR gamma chain.</title>
        <authorList>
            <person name="Morton H.C."/>
            <person name="Storset A.K."/>
            <person name="Brandtzaeg P."/>
        </authorList>
    </citation>
    <scope>NUCLEOTIDE SEQUENCE [MRNA]</scope>
</reference>
<reference key="2">
    <citation type="submission" date="2005-08" db="EMBL/GenBank/DDBJ databases">
        <authorList>
            <consortium name="NIH - Mammalian Gene Collection (MGC) project"/>
        </authorList>
    </citation>
    <scope>NUCLEOTIDE SEQUENCE [LARGE SCALE MRNA]</scope>
    <source>
        <strain>Hereford</strain>
        <tissue>Testis</tissue>
    </source>
</reference>
<keyword id="KW-1003">Cell membrane</keyword>
<keyword id="KW-1015">Disulfide bond</keyword>
<keyword id="KW-0389">IgE-binding protein</keyword>
<keyword id="KW-0391">Immunity</keyword>
<keyword id="KW-0399">Innate immunity</keyword>
<keyword id="KW-0472">Membrane</keyword>
<keyword id="KW-0597">Phosphoprotein</keyword>
<keyword id="KW-0675">Receptor</keyword>
<keyword id="KW-1185">Reference proteome</keyword>
<keyword id="KW-0732">Signal</keyword>
<keyword id="KW-0812">Transmembrane</keyword>
<keyword id="KW-1133">Transmembrane helix</keyword>
<proteinExistence type="inferred from homology"/>
<comment type="function">
    <text evidence="3">Adapter protein containing an immunoreceptor tyrosine-based activation motif (ITAM) that transduces activation signals from various immunoreceptors. As a component of the high-affinity immunoglobulin E (IgE) receptor, mediates allergic inflammatory signaling in mast cells. As a constitutive component of interleukin-3 receptor complex, selectively mediates interleukin 4/IL4 production by basophils priming T-cells toward effector T-helper 2 subset. Associates with pattern recognition receptors CLEC4D and CLEC4E to form a functional signaling complex in myeloid cells. Binding of mycobacterial trehalose 6,6'-dimycolate (TDM) to this receptor complex leads to phosphorylation of ITAM, triggering activation of SYK, CARD9 and NF-kappa-B, consequently driving maturation of antigen-presenting cells and shaping antigen-specific priming of T-cells toward effector T-helper 1 and T-helper 17 cell subtypes. May function cooperatively with other activating receptors. Functionally linked to integrin beta-2/ITGB2-mediated neutrophil activation. Also involved in integrin alpha-2/ITGA2-mediated platelet activation.</text>
</comment>
<comment type="subunit">
    <text evidence="2 3 4">IgE Fc receptor is a tetramer of an alpha chain, a beta chain, and two disulfide linked gamma chains. Associates with FCGR1A; forms a functional signaling complex (By similarity). The signaling subunit of immunoglobulin gamma (IgG) Fc receptor complex. As a homodimer or a heterodimer of CD247 and FCER1G, associates with the ligand binding subunit FCGR3A to form a functional receptor complex (By similarity). Associates with CLEC6A. Interacts with CLEC4E. Interacts (via ITAM domain) with SYK (via SH2 domains); activates SYK, enabling integrin-mediated activation of neutrophils and macrophages (By similarity). Interacts with CSF2RB and recruits SYK in response to IL3 stimulation; this interaction is direct (By similarity). Interacts with CD300LH; the interaction may be indirect. Interacts with CD300LD (By similarity). Interacts with TARM1 (By similarity).</text>
</comment>
<comment type="subcellular location">
    <subcellularLocation>
        <location evidence="1">Cell membrane</location>
        <topology evidence="1">Single-pass type I membrane protein</topology>
    </subcellularLocation>
</comment>
<comment type="similarity">
    <text evidence="7">Belongs to the CD3Z/FCER1G family.</text>
</comment>
<dbReference type="EMBL" id="AF316499">
    <property type="protein sequence ID" value="AAK15275.1"/>
    <property type="molecule type" value="mRNA"/>
</dbReference>
<dbReference type="EMBL" id="BC102668">
    <property type="protein sequence ID" value="AAI02669.1"/>
    <property type="molecule type" value="mRNA"/>
</dbReference>
<dbReference type="RefSeq" id="NP_776962.1">
    <property type="nucleotide sequence ID" value="NM_174537.3"/>
</dbReference>
<dbReference type="SMR" id="Q9BDR7"/>
<dbReference type="FunCoup" id="Q9BDR7">
    <property type="interactions" value="486"/>
</dbReference>
<dbReference type="STRING" id="9913.ENSBTAP00000033956"/>
<dbReference type="PaxDb" id="9913-ENSBTAP00000033956"/>
<dbReference type="Ensembl" id="ENSBTAT00000034054.2">
    <property type="protein sequence ID" value="ENSBTAP00000033956.1"/>
    <property type="gene ID" value="ENSBTAG00000024503.3"/>
</dbReference>
<dbReference type="GeneID" id="282226"/>
<dbReference type="KEGG" id="bta:282226"/>
<dbReference type="CTD" id="2207"/>
<dbReference type="VEuPathDB" id="HostDB:ENSBTAG00000024503"/>
<dbReference type="VGNC" id="VGNC:28931">
    <property type="gene designation" value="FCER1G"/>
</dbReference>
<dbReference type="eggNOG" id="ENOG502S7XC">
    <property type="taxonomic scope" value="Eukaryota"/>
</dbReference>
<dbReference type="GeneTree" id="ENSGT00390000003894"/>
<dbReference type="HOGENOM" id="CLU_192374_0_0_1"/>
<dbReference type="InParanoid" id="Q9BDR7"/>
<dbReference type="OMA" id="CRLKIQM"/>
<dbReference type="OrthoDB" id="9941225at2759"/>
<dbReference type="TreeFam" id="TF330937"/>
<dbReference type="Reactome" id="R-BTA-114604">
    <property type="pathway name" value="GPVI-mediated activation cascade"/>
</dbReference>
<dbReference type="Reactome" id="R-BTA-202733">
    <property type="pathway name" value="Cell surface interactions at the vascular wall"/>
</dbReference>
<dbReference type="Reactome" id="R-BTA-2454202">
    <property type="pathway name" value="Fc epsilon receptor (FCERI) signaling"/>
</dbReference>
<dbReference type="Reactome" id="R-BTA-2730905">
    <property type="pathway name" value="Role of LAT2/NTAL/LAB on calcium mobilization"/>
</dbReference>
<dbReference type="Reactome" id="R-BTA-2871796">
    <property type="pathway name" value="FCERI mediated MAPK activation"/>
</dbReference>
<dbReference type="Reactome" id="R-BTA-2871809">
    <property type="pathway name" value="FCERI mediated Ca+2 mobilization"/>
</dbReference>
<dbReference type="Reactome" id="R-BTA-2871837">
    <property type="pathway name" value="FCERI mediated NF-kB activation"/>
</dbReference>
<dbReference type="Reactome" id="R-BTA-5621480">
    <property type="pathway name" value="Dectin-2 family"/>
</dbReference>
<dbReference type="Reactome" id="R-BTA-6798695">
    <property type="pathway name" value="Neutrophil degranulation"/>
</dbReference>
<dbReference type="Reactome" id="R-BTA-75892">
    <property type="pathway name" value="Platelet Adhesion to exposed collagen"/>
</dbReference>
<dbReference type="Proteomes" id="UP000009136">
    <property type="component" value="Chromosome 3"/>
</dbReference>
<dbReference type="Bgee" id="ENSBTAG00000024503">
    <property type="expression patterns" value="Expressed in monocyte and 104 other cell types or tissues"/>
</dbReference>
<dbReference type="GO" id="GO:0009897">
    <property type="term" value="C:external side of plasma membrane"/>
    <property type="evidence" value="ECO:0000318"/>
    <property type="project" value="GO_Central"/>
</dbReference>
<dbReference type="GO" id="GO:0032998">
    <property type="term" value="C:Fc-epsilon receptor I complex"/>
    <property type="evidence" value="ECO:0000318"/>
    <property type="project" value="GO_Central"/>
</dbReference>
<dbReference type="GO" id="GO:0033001">
    <property type="term" value="C:Fc-gamma receptor III complex"/>
    <property type="evidence" value="ECO:0007669"/>
    <property type="project" value="Ensembl"/>
</dbReference>
<dbReference type="GO" id="GO:0019863">
    <property type="term" value="F:IgE binding"/>
    <property type="evidence" value="ECO:0007669"/>
    <property type="project" value="UniProtKB-KW"/>
</dbReference>
<dbReference type="GO" id="GO:0019767">
    <property type="term" value="F:IgE receptor activity"/>
    <property type="evidence" value="ECO:0000318"/>
    <property type="project" value="GO_Central"/>
</dbReference>
<dbReference type="GO" id="GO:0019864">
    <property type="term" value="F:IgG binding"/>
    <property type="evidence" value="ECO:0000318"/>
    <property type="project" value="GO_Central"/>
</dbReference>
<dbReference type="GO" id="GO:0042803">
    <property type="term" value="F:protein homodimerization activity"/>
    <property type="evidence" value="ECO:0007669"/>
    <property type="project" value="Ensembl"/>
</dbReference>
<dbReference type="GO" id="GO:0042590">
    <property type="term" value="P:antigen processing and presentation of exogenous peptide antigen via MHC class I"/>
    <property type="evidence" value="ECO:0000318"/>
    <property type="project" value="GO_Central"/>
</dbReference>
<dbReference type="GO" id="GO:0019886">
    <property type="term" value="P:antigen processing and presentation of exogenous peptide antigen via MHC class II"/>
    <property type="evidence" value="ECO:0000318"/>
    <property type="project" value="GO_Central"/>
</dbReference>
<dbReference type="GO" id="GO:0071404">
    <property type="term" value="P:cellular response to low-density lipoprotein particle stimulus"/>
    <property type="evidence" value="ECO:0000250"/>
    <property type="project" value="UniProtKB"/>
</dbReference>
<dbReference type="GO" id="GO:0042742">
    <property type="term" value="P:defense response to bacterium"/>
    <property type="evidence" value="ECO:0000318"/>
    <property type="project" value="GO_Central"/>
</dbReference>
<dbReference type="GO" id="GO:0002431">
    <property type="term" value="P:Fc receptor mediated stimulatory signaling pathway"/>
    <property type="evidence" value="ECO:0000318"/>
    <property type="project" value="GO_Central"/>
</dbReference>
<dbReference type="GO" id="GO:0038094">
    <property type="term" value="P:Fc-gamma receptor signaling pathway"/>
    <property type="evidence" value="ECO:0000318"/>
    <property type="project" value="GO_Central"/>
</dbReference>
<dbReference type="GO" id="GO:0016064">
    <property type="term" value="P:immunoglobulin mediated immune response"/>
    <property type="evidence" value="ECO:0000318"/>
    <property type="project" value="GO_Central"/>
</dbReference>
<dbReference type="GO" id="GO:0045087">
    <property type="term" value="P:innate immune response"/>
    <property type="evidence" value="ECO:0000318"/>
    <property type="project" value="GO_Central"/>
</dbReference>
<dbReference type="GO" id="GO:0007229">
    <property type="term" value="P:integrin-mediated signaling pathway"/>
    <property type="evidence" value="ECO:0007669"/>
    <property type="project" value="Ensembl"/>
</dbReference>
<dbReference type="GO" id="GO:0038156">
    <property type="term" value="P:interleukin-3-mediated signaling pathway"/>
    <property type="evidence" value="ECO:0000250"/>
    <property type="project" value="UniProtKB"/>
</dbReference>
<dbReference type="GO" id="GO:0033024">
    <property type="term" value="P:mast cell apoptotic process"/>
    <property type="evidence" value="ECO:0007669"/>
    <property type="project" value="Ensembl"/>
</dbReference>
<dbReference type="GO" id="GO:0043303">
    <property type="term" value="P:mast cell degranulation"/>
    <property type="evidence" value="ECO:0007669"/>
    <property type="project" value="Ensembl"/>
</dbReference>
<dbReference type="GO" id="GO:0033026">
    <property type="term" value="P:negative regulation of mast cell apoptotic process"/>
    <property type="evidence" value="ECO:0007669"/>
    <property type="project" value="Ensembl"/>
</dbReference>
<dbReference type="GO" id="GO:0002283">
    <property type="term" value="P:neutrophil activation involved in immune response"/>
    <property type="evidence" value="ECO:0000318"/>
    <property type="project" value="GO_Central"/>
</dbReference>
<dbReference type="GO" id="GO:0030593">
    <property type="term" value="P:neutrophil chemotaxis"/>
    <property type="evidence" value="ECO:0000318"/>
    <property type="project" value="GO_Central"/>
</dbReference>
<dbReference type="GO" id="GO:0030316">
    <property type="term" value="P:osteoclast differentiation"/>
    <property type="evidence" value="ECO:0007669"/>
    <property type="project" value="Ensembl"/>
</dbReference>
<dbReference type="GO" id="GO:0006911">
    <property type="term" value="P:phagocytosis, engulfment"/>
    <property type="evidence" value="ECO:0007669"/>
    <property type="project" value="Ensembl"/>
</dbReference>
<dbReference type="GO" id="GO:0032733">
    <property type="term" value="P:positive regulation of interleukin-10 production"/>
    <property type="evidence" value="ECO:0007669"/>
    <property type="project" value="Ensembl"/>
</dbReference>
<dbReference type="GO" id="GO:0032753">
    <property type="term" value="P:positive regulation of interleukin-4 production"/>
    <property type="evidence" value="ECO:0000250"/>
    <property type="project" value="UniProtKB"/>
</dbReference>
<dbReference type="GO" id="GO:0032755">
    <property type="term" value="P:positive regulation of interleukin-6 production"/>
    <property type="evidence" value="ECO:0007669"/>
    <property type="project" value="Ensembl"/>
</dbReference>
<dbReference type="GO" id="GO:0032765">
    <property type="term" value="P:positive regulation of mast cell cytokine production"/>
    <property type="evidence" value="ECO:0007669"/>
    <property type="project" value="Ensembl"/>
</dbReference>
<dbReference type="GO" id="GO:0043306">
    <property type="term" value="P:positive regulation of mast cell degranulation"/>
    <property type="evidence" value="ECO:0007669"/>
    <property type="project" value="Ensembl"/>
</dbReference>
<dbReference type="GO" id="GO:0050766">
    <property type="term" value="P:positive regulation of phagocytosis"/>
    <property type="evidence" value="ECO:0000318"/>
    <property type="project" value="GO_Central"/>
</dbReference>
<dbReference type="GO" id="GO:2000010">
    <property type="term" value="P:positive regulation of protein localization to cell surface"/>
    <property type="evidence" value="ECO:0007669"/>
    <property type="project" value="Ensembl"/>
</dbReference>
<dbReference type="GO" id="GO:0032760">
    <property type="term" value="P:positive regulation of tumor necrosis factor production"/>
    <property type="evidence" value="ECO:0007669"/>
    <property type="project" value="Ensembl"/>
</dbReference>
<dbReference type="GO" id="GO:0001812">
    <property type="term" value="P:positive regulation of type I hypersensitivity"/>
    <property type="evidence" value="ECO:0007669"/>
    <property type="project" value="Ensembl"/>
</dbReference>
<dbReference type="GO" id="GO:0001798">
    <property type="term" value="P:positive regulation of type IIa hypersensitivity"/>
    <property type="evidence" value="ECO:0007669"/>
    <property type="project" value="Ensembl"/>
</dbReference>
<dbReference type="GO" id="GO:0001805">
    <property type="term" value="P:positive regulation of type III hypersensitivity"/>
    <property type="evidence" value="ECO:0007669"/>
    <property type="project" value="Ensembl"/>
</dbReference>
<dbReference type="GO" id="GO:0072659">
    <property type="term" value="P:protein localization to plasma membrane"/>
    <property type="evidence" value="ECO:0007669"/>
    <property type="project" value="Ensembl"/>
</dbReference>
<dbReference type="GO" id="GO:0031623">
    <property type="term" value="P:receptor internalization"/>
    <property type="evidence" value="ECO:0000250"/>
    <property type="project" value="UniProtKB"/>
</dbReference>
<dbReference type="GO" id="GO:0010543">
    <property type="term" value="P:regulation of platelet activation"/>
    <property type="evidence" value="ECO:0000318"/>
    <property type="project" value="GO_Central"/>
</dbReference>
<dbReference type="GO" id="GO:0002554">
    <property type="term" value="P:serotonin secretion by platelet"/>
    <property type="evidence" value="ECO:0007669"/>
    <property type="project" value="Ensembl"/>
</dbReference>
<dbReference type="GO" id="GO:0002292">
    <property type="term" value="P:T cell differentiation involved in immune response"/>
    <property type="evidence" value="ECO:0000318"/>
    <property type="project" value="GO_Central"/>
</dbReference>
<dbReference type="InterPro" id="IPR021663">
    <property type="entry name" value="CD3_zeta/IgE_Fc_rcpt_gamma"/>
</dbReference>
<dbReference type="InterPro" id="IPR042340">
    <property type="entry name" value="FCER1G"/>
</dbReference>
<dbReference type="InterPro" id="IPR003110">
    <property type="entry name" value="Phos_immunorcpt_sig_ITAM"/>
</dbReference>
<dbReference type="PANTHER" id="PTHR16803">
    <property type="entry name" value="HIGH AFFINITY IMMUNOGLOBULIN EPSILON RECEPTOR GAMMA-SUBUNIT"/>
    <property type="match status" value="1"/>
</dbReference>
<dbReference type="PANTHER" id="PTHR16803:SF0">
    <property type="entry name" value="HIGH AFFINITY IMMUNOGLOBULIN EPSILON RECEPTOR SUBUNIT GAMMA"/>
    <property type="match status" value="1"/>
</dbReference>
<dbReference type="Pfam" id="PF02189">
    <property type="entry name" value="ITAM"/>
    <property type="match status" value="1"/>
</dbReference>
<dbReference type="Pfam" id="PF11628">
    <property type="entry name" value="TCR_zetazeta"/>
    <property type="match status" value="1"/>
</dbReference>
<dbReference type="SMART" id="SM00077">
    <property type="entry name" value="ITAM"/>
    <property type="match status" value="1"/>
</dbReference>
<dbReference type="PROSITE" id="PS51055">
    <property type="entry name" value="ITAM_1"/>
    <property type="match status" value="1"/>
</dbReference>
<evidence type="ECO:0000250" key="1"/>
<evidence type="ECO:0000250" key="2">
    <source>
        <dbReference type="UniProtKB" id="P20411"/>
    </source>
</evidence>
<evidence type="ECO:0000250" key="3">
    <source>
        <dbReference type="UniProtKB" id="P20491"/>
    </source>
</evidence>
<evidence type="ECO:0000250" key="4">
    <source>
        <dbReference type="UniProtKB" id="P30273"/>
    </source>
</evidence>
<evidence type="ECO:0000255" key="5"/>
<evidence type="ECO:0000255" key="6">
    <source>
        <dbReference type="PROSITE-ProRule" id="PRU00379"/>
    </source>
</evidence>
<evidence type="ECO:0000305" key="7"/>
<sequence length="85" mass="9463">MIPAVVLLLLLLVEQAAALGEPQLCYILDAILFLYGIVLTLLYCRLKLQVRKAATASEKSDGIYTGLSTRTQETYETLKHEKPPQ</sequence>
<name>FCERG_BOVIN</name>
<feature type="signal peptide" evidence="5">
    <location>
        <begin position="1"/>
        <end position="18"/>
    </location>
</feature>
<feature type="chain" id="PRO_0000016499" description="High affinity immunoglobulin epsilon receptor subunit gamma">
    <location>
        <begin position="19"/>
        <end position="85"/>
    </location>
</feature>
<feature type="topological domain" description="Extracellular" evidence="5">
    <location>
        <begin position="19"/>
        <end position="23"/>
    </location>
</feature>
<feature type="transmembrane region" description="Helical" evidence="5">
    <location>
        <begin position="24"/>
        <end position="44"/>
    </location>
</feature>
<feature type="topological domain" description="Cytoplasmic" evidence="5">
    <location>
        <begin position="45"/>
        <end position="85"/>
    </location>
</feature>
<feature type="domain" description="ITAM" evidence="6">
    <location>
        <begin position="53"/>
        <end position="81"/>
    </location>
</feature>
<feature type="modified residue" description="Phosphotyrosine" evidence="3 6">
    <location>
        <position position="64"/>
    </location>
</feature>
<feature type="modified residue" description="Phosphoserine" evidence="4">
    <location>
        <position position="68"/>
    </location>
</feature>
<feature type="modified residue" description="Phosphotyrosine" evidence="3 6">
    <location>
        <position position="75"/>
    </location>
</feature>
<feature type="modified residue" description="Phosphothreonine" evidence="3">
    <location>
        <position position="77"/>
    </location>
</feature>
<feature type="disulfide bond" description="Interchain" evidence="1">
    <location>
        <position position="25"/>
    </location>
</feature>
<gene>
    <name type="primary">FCER1G</name>
</gene>
<organism>
    <name type="scientific">Bos taurus</name>
    <name type="common">Bovine</name>
    <dbReference type="NCBI Taxonomy" id="9913"/>
    <lineage>
        <taxon>Eukaryota</taxon>
        <taxon>Metazoa</taxon>
        <taxon>Chordata</taxon>
        <taxon>Craniata</taxon>
        <taxon>Vertebrata</taxon>
        <taxon>Euteleostomi</taxon>
        <taxon>Mammalia</taxon>
        <taxon>Eutheria</taxon>
        <taxon>Laurasiatheria</taxon>
        <taxon>Artiodactyla</taxon>
        <taxon>Ruminantia</taxon>
        <taxon>Pecora</taxon>
        <taxon>Bovidae</taxon>
        <taxon>Bovinae</taxon>
        <taxon>Bos</taxon>
    </lineage>
</organism>
<protein>
    <recommendedName>
        <fullName>High affinity immunoglobulin epsilon receptor subunit gamma</fullName>
    </recommendedName>
    <alternativeName>
        <fullName>Fc receptor gamma-chain</fullName>
        <shortName>FcRgamma</shortName>
    </alternativeName>
    <alternativeName>
        <fullName>Fc-epsilon RI-gamma</fullName>
    </alternativeName>
    <alternativeName>
        <fullName>IgE Fc receptor subunit gamma</fullName>
        <shortName>FceRI gamma</shortName>
    </alternativeName>
</protein>
<accession>Q9BDR7</accession>
<accession>Q3SZX3</accession>